<feature type="initiator methionine" description="Removed" evidence="1">
    <location>
        <position position="1"/>
    </location>
</feature>
<feature type="chain" id="PRO_0000055328" description="Histone H2A.Z">
    <location>
        <begin position="2"/>
        <end position="133"/>
    </location>
</feature>
<feature type="region of interest" description="Disordered" evidence="2">
    <location>
        <begin position="1"/>
        <end position="31"/>
    </location>
</feature>
<feature type="modified residue" description="N-acetylserine" evidence="1">
    <location>
        <position position="2"/>
    </location>
</feature>
<feature type="modified residue" description="N6-acetyllysine" evidence="1">
    <location>
        <position position="4"/>
    </location>
</feature>
<feature type="modified residue" description="N6-acetyllysine" evidence="1">
    <location>
        <position position="9"/>
    </location>
</feature>
<feature type="modified residue" description="N6-acetyllysine" evidence="1">
    <location>
        <position position="11"/>
    </location>
</feature>
<feature type="modified residue" description="N6-acetyllysine" evidence="1">
    <location>
        <position position="15"/>
    </location>
</feature>
<protein>
    <recommendedName>
        <fullName>Histone H2A.Z</fullName>
    </recommendedName>
</protein>
<keyword id="KW-0007">Acetylation</keyword>
<keyword id="KW-0010">Activator</keyword>
<keyword id="KW-0156">Chromatin regulator</keyword>
<keyword id="KW-0158">Chromosome</keyword>
<keyword id="KW-0238">DNA-binding</keyword>
<keyword id="KW-0544">Nucleosome core</keyword>
<keyword id="KW-0539">Nucleus</keyword>
<keyword id="KW-1185">Reference proteome</keyword>
<keyword id="KW-0804">Transcription</keyword>
<keyword id="KW-0805">Transcription regulation</keyword>
<evidence type="ECO:0000250" key="1"/>
<evidence type="ECO:0000256" key="2">
    <source>
        <dbReference type="SAM" id="MobiDB-lite"/>
    </source>
</evidence>
<evidence type="ECO:0000305" key="3"/>
<proteinExistence type="inferred from homology"/>
<reference key="1">
    <citation type="journal article" date="2004" name="Science">
        <title>The Ashbya gossypii genome as a tool for mapping the ancient Saccharomyces cerevisiae genome.</title>
        <authorList>
            <person name="Dietrich F.S."/>
            <person name="Voegeli S."/>
            <person name="Brachat S."/>
            <person name="Lerch A."/>
            <person name="Gates K."/>
            <person name="Steiner S."/>
            <person name="Mohr C."/>
            <person name="Poehlmann R."/>
            <person name="Luedi P."/>
            <person name="Choi S."/>
            <person name="Wing R.A."/>
            <person name="Flavier A."/>
            <person name="Gaffney T.D."/>
            <person name="Philippsen P."/>
        </authorList>
    </citation>
    <scope>NUCLEOTIDE SEQUENCE [LARGE SCALE GENOMIC DNA]</scope>
    <source>
        <strain>ATCC 10895 / CBS 109.51 / FGSC 9923 / NRRL Y-1056</strain>
    </source>
</reference>
<reference key="2">
    <citation type="journal article" date="2013" name="G3 (Bethesda)">
        <title>Genomes of Ashbya fungi isolated from insects reveal four mating-type loci, numerous translocations, lack of transposons, and distinct gene duplications.</title>
        <authorList>
            <person name="Dietrich F.S."/>
            <person name="Voegeli S."/>
            <person name="Kuo S."/>
            <person name="Philippsen P."/>
        </authorList>
    </citation>
    <scope>GENOME REANNOTATION</scope>
    <source>
        <strain>ATCC 10895 / CBS 109.51 / FGSC 9923 / NRRL Y-1056</strain>
    </source>
</reference>
<dbReference type="EMBL" id="AE016816">
    <property type="protein sequence ID" value="AAS51211.1"/>
    <property type="molecule type" value="Genomic_DNA"/>
</dbReference>
<dbReference type="RefSeq" id="NP_983387.1">
    <property type="nucleotide sequence ID" value="NM_208740.1"/>
</dbReference>
<dbReference type="SMR" id="Q75CC6"/>
<dbReference type="FunCoup" id="Q75CC6">
    <property type="interactions" value="1224"/>
</dbReference>
<dbReference type="STRING" id="284811.Q75CC6"/>
<dbReference type="EnsemblFungi" id="AAS51211">
    <property type="protein sequence ID" value="AAS51211"/>
    <property type="gene ID" value="AGOS_ACL017C"/>
</dbReference>
<dbReference type="GeneID" id="4619512"/>
<dbReference type="KEGG" id="ago:AGOS_ACL017C"/>
<dbReference type="eggNOG" id="KOG1757">
    <property type="taxonomic scope" value="Eukaryota"/>
</dbReference>
<dbReference type="HOGENOM" id="CLU_062828_2_1_1"/>
<dbReference type="InParanoid" id="Q75CC6"/>
<dbReference type="OMA" id="MNKKGAP"/>
<dbReference type="OrthoDB" id="9421954at2759"/>
<dbReference type="Proteomes" id="UP000000591">
    <property type="component" value="Chromosome III"/>
</dbReference>
<dbReference type="GO" id="GO:0000791">
    <property type="term" value="C:euchromatin"/>
    <property type="evidence" value="ECO:0007669"/>
    <property type="project" value="EnsemblFungi"/>
</dbReference>
<dbReference type="GO" id="GO:0000786">
    <property type="term" value="C:nucleosome"/>
    <property type="evidence" value="ECO:0000318"/>
    <property type="project" value="GO_Central"/>
</dbReference>
<dbReference type="GO" id="GO:0005634">
    <property type="term" value="C:nucleus"/>
    <property type="evidence" value="ECO:0000318"/>
    <property type="project" value="GO_Central"/>
</dbReference>
<dbReference type="GO" id="GO:0031490">
    <property type="term" value="F:chromatin DNA binding"/>
    <property type="evidence" value="ECO:0007669"/>
    <property type="project" value="EnsemblFungi"/>
</dbReference>
<dbReference type="GO" id="GO:0042802">
    <property type="term" value="F:identical protein binding"/>
    <property type="evidence" value="ECO:0007669"/>
    <property type="project" value="EnsemblFungi"/>
</dbReference>
<dbReference type="GO" id="GO:0046982">
    <property type="term" value="F:protein heterodimerization activity"/>
    <property type="evidence" value="ECO:0007669"/>
    <property type="project" value="InterPro"/>
</dbReference>
<dbReference type="GO" id="GO:0000978">
    <property type="term" value="F:RNA polymerase II cis-regulatory region sequence-specific DNA binding"/>
    <property type="evidence" value="ECO:0007669"/>
    <property type="project" value="EnsemblFungi"/>
</dbReference>
<dbReference type="GO" id="GO:0030527">
    <property type="term" value="F:structural constituent of chromatin"/>
    <property type="evidence" value="ECO:0000318"/>
    <property type="project" value="GO_Central"/>
</dbReference>
<dbReference type="GO" id="GO:0140898">
    <property type="term" value="P:CENP-A eviction from euchromatin"/>
    <property type="evidence" value="ECO:0007669"/>
    <property type="project" value="EnsemblFungi"/>
</dbReference>
<dbReference type="GO" id="GO:0031507">
    <property type="term" value="P:heterochromatin formation"/>
    <property type="evidence" value="ECO:0000318"/>
    <property type="project" value="GO_Central"/>
</dbReference>
<dbReference type="GO" id="GO:0070481">
    <property type="term" value="P:nuclear-transcribed mRNA catabolic process, non-stop decay"/>
    <property type="evidence" value="ECO:0007669"/>
    <property type="project" value="EnsemblFungi"/>
</dbReference>
<dbReference type="GO" id="GO:0006357">
    <property type="term" value="P:regulation of transcription by RNA polymerase II"/>
    <property type="evidence" value="ECO:0007669"/>
    <property type="project" value="EnsemblFungi"/>
</dbReference>
<dbReference type="GO" id="GO:0030466">
    <property type="term" value="P:silent mating-type cassette heterochromatin formation"/>
    <property type="evidence" value="ECO:0007669"/>
    <property type="project" value="EnsemblFungi"/>
</dbReference>
<dbReference type="GO" id="GO:0006368">
    <property type="term" value="P:transcription elongation by RNA polymerase II"/>
    <property type="evidence" value="ECO:0007669"/>
    <property type="project" value="EnsemblFungi"/>
</dbReference>
<dbReference type="CDD" id="cd00074">
    <property type="entry name" value="HFD_H2A"/>
    <property type="match status" value="1"/>
</dbReference>
<dbReference type="FunFam" id="1.10.20.10:FF:000021">
    <property type="entry name" value="Histone H2A"/>
    <property type="match status" value="1"/>
</dbReference>
<dbReference type="Gene3D" id="1.10.20.10">
    <property type="entry name" value="Histone, subunit A"/>
    <property type="match status" value="1"/>
</dbReference>
<dbReference type="InterPro" id="IPR009072">
    <property type="entry name" value="Histone-fold"/>
</dbReference>
<dbReference type="InterPro" id="IPR002119">
    <property type="entry name" value="Histone_H2A"/>
</dbReference>
<dbReference type="InterPro" id="IPR007125">
    <property type="entry name" value="Histone_H2A/H2B/H3"/>
</dbReference>
<dbReference type="InterPro" id="IPR032454">
    <property type="entry name" value="Histone_H2A_C"/>
</dbReference>
<dbReference type="InterPro" id="IPR032458">
    <property type="entry name" value="Histone_H2A_CS"/>
</dbReference>
<dbReference type="PANTHER" id="PTHR23430">
    <property type="entry name" value="HISTONE H2A"/>
    <property type="match status" value="1"/>
</dbReference>
<dbReference type="Pfam" id="PF00125">
    <property type="entry name" value="Histone"/>
    <property type="match status" value="1"/>
</dbReference>
<dbReference type="Pfam" id="PF16211">
    <property type="entry name" value="Histone_H2A_C"/>
    <property type="match status" value="1"/>
</dbReference>
<dbReference type="PRINTS" id="PR00620">
    <property type="entry name" value="HISTONEH2A"/>
</dbReference>
<dbReference type="SMART" id="SM00414">
    <property type="entry name" value="H2A"/>
    <property type="match status" value="1"/>
</dbReference>
<dbReference type="SUPFAM" id="SSF47113">
    <property type="entry name" value="Histone-fold"/>
    <property type="match status" value="1"/>
</dbReference>
<dbReference type="PROSITE" id="PS00046">
    <property type="entry name" value="HISTONE_H2A"/>
    <property type="match status" value="1"/>
</dbReference>
<comment type="function">
    <text evidence="1">Variant histone H2A which can replace H2A in some nucleosomes. Nucleosomes wrap and compact DNA into chromatin, limiting DNA accessibility to the cellular machineries which require DNA as a template. Histones thereby play a central role in transcription regulation, DNA repair, DNA replication and chromosomal stability. DNA accessibility is regulated via a complex set of post-translational modifications of histones, also called histone code, and nucleosome remodeling. This variant is enriched at promoters, it may keep them in a repressed state until the appropriate activation signal is received. Near telomeres, it may counteract gene silencing caused by the spread of heterochromatin proteins. Required for the RNA polymerase II and SPT15/TBP recruitment to the target genes. Involved in chromosome stability (By similarity).</text>
</comment>
<comment type="subunit">
    <text evidence="1">The nucleosome is a histone octamer containing two molecules each of H2A, H2B, H3 and H4 assembled in one H3-H4 heterotetramer and two H2A-H2B heterodimers. The octamer wraps approximately 147 bp of DNA. H2A or its variant H2A.Z forms a heterodimer with H2B. H2A.Z associates with the VPS72/SWC2 subunit of the SWR1 chromatin remodeling complex. Also interacts with RBP1/DNA-directed RNA polymerase II largest subunit (By similarity).</text>
</comment>
<comment type="subcellular location">
    <subcellularLocation>
        <location evidence="1">Nucleus</location>
    </subcellularLocation>
    <subcellularLocation>
        <location evidence="1">Chromosome</location>
    </subcellularLocation>
</comment>
<comment type="PTM">
    <text evidence="1">Acetylated by ESA1 and/or GCN5 to form H2A.ZK3Ac, H2A.ZK8Ac, H2A.ZK10Ac and H2A.ZK14Ac once deposited into chromatin. Acetylation is required for function at telomeres. H2A.ZK14Ac is acetylated at the promoters of active genes (By similarity).</text>
</comment>
<comment type="similarity">
    <text evidence="3">Belongs to the histone H2A family.</text>
</comment>
<comment type="caution">
    <text evidence="3">To ensure consistency between histone entries, we follow the 'Brno' nomenclature for histone modifications, with positions referring to those used in the literature for the 'closest' model organism. Due to slight variations in histone sequences between organisms and to the presence of initiator methionine in UniProtKB/Swiss-Prot sequences, the actual positions of modified amino acids in the sequence generally differ. In this entry the following conventions are used: H2A.ZK3ac = acetylated Lys-4; H2A.ZK8ac = acetylated Lys-9; H2A.ZK10ac = acetylated Lys-11; H2A.ZK14ac = acetylated Lys-15.</text>
</comment>
<name>H2AZ_EREGS</name>
<gene>
    <name type="primary">HTZ1</name>
    <name type="ordered locus">ACL017C</name>
</gene>
<sequence length="133" mass="14099">MSGKVHGGKGKSGAKDGGPLGSQSHSARAGLQFPVGRIKRYLKKNAAGKTRVGSKAAIYLTAVLEYLTAEVLELAGNAAKDLKVKRITPRHLQLAIRGDDELDSLIRATIASGGVLPHINKALLLKVEKKTHK</sequence>
<accession>Q75CC6</accession>
<organism>
    <name type="scientific">Eremothecium gossypii (strain ATCC 10895 / CBS 109.51 / FGSC 9923 / NRRL Y-1056)</name>
    <name type="common">Yeast</name>
    <name type="synonym">Ashbya gossypii</name>
    <dbReference type="NCBI Taxonomy" id="284811"/>
    <lineage>
        <taxon>Eukaryota</taxon>
        <taxon>Fungi</taxon>
        <taxon>Dikarya</taxon>
        <taxon>Ascomycota</taxon>
        <taxon>Saccharomycotina</taxon>
        <taxon>Saccharomycetes</taxon>
        <taxon>Saccharomycetales</taxon>
        <taxon>Saccharomycetaceae</taxon>
        <taxon>Eremothecium</taxon>
    </lineage>
</organism>